<dbReference type="EMBL" id="X13987">
    <property type="protein sequence ID" value="CAA32166.1"/>
    <property type="molecule type" value="Genomic_DNA"/>
</dbReference>
<dbReference type="EMBL" id="X13333">
    <property type="protein sequence ID" value="CAA31710.1"/>
    <property type="molecule type" value="mRNA"/>
</dbReference>
<dbReference type="EMBL" id="M34510">
    <property type="protein sequence ID" value="AAA37387.1"/>
    <property type="molecule type" value="Genomic_DNA"/>
</dbReference>
<dbReference type="EMBL" id="BC057889">
    <property type="protein sequence ID" value="AAH57889.1"/>
    <property type="molecule type" value="mRNA"/>
</dbReference>
<dbReference type="CCDS" id="CCDS29159.1"/>
<dbReference type="PIR" id="S03605">
    <property type="entry name" value="TDMSM4"/>
</dbReference>
<dbReference type="RefSeq" id="NP_033971.1">
    <property type="nucleotide sequence ID" value="NM_009841.4"/>
</dbReference>
<dbReference type="PDB" id="1WWL">
    <property type="method" value="X-ray"/>
    <property type="resolution" value="2.50 A"/>
    <property type="chains" value="A/B=20-329"/>
</dbReference>
<dbReference type="PDBsum" id="1WWL"/>
<dbReference type="SMR" id="P10810"/>
<dbReference type="BioGRID" id="198573">
    <property type="interactions" value="2"/>
</dbReference>
<dbReference type="FunCoup" id="P10810">
    <property type="interactions" value="665"/>
</dbReference>
<dbReference type="STRING" id="10090.ENSMUSP00000056669"/>
<dbReference type="ChEMBL" id="CHEMBL2384896"/>
<dbReference type="GlyCosmos" id="P10810">
    <property type="glycosylation" value="5 sites, No reported glycans"/>
</dbReference>
<dbReference type="GlyGen" id="P10810">
    <property type="glycosylation" value="5 sites, 3 N-linked glycans (3 sites)"/>
</dbReference>
<dbReference type="iPTMnet" id="P10810"/>
<dbReference type="PhosphoSitePlus" id="P10810"/>
<dbReference type="SwissPalm" id="P10810"/>
<dbReference type="PaxDb" id="10090-ENSMUSP00000056669"/>
<dbReference type="PeptideAtlas" id="P10810"/>
<dbReference type="ProteomicsDB" id="279962"/>
<dbReference type="Antibodypedia" id="798">
    <property type="antibodies" value="3889 antibodies from 56 providers"/>
</dbReference>
<dbReference type="DNASU" id="12475"/>
<dbReference type="Ensembl" id="ENSMUST00000061829.8">
    <property type="protein sequence ID" value="ENSMUSP00000056669.7"/>
    <property type="gene ID" value="ENSMUSG00000051439.8"/>
</dbReference>
<dbReference type="GeneID" id="12475"/>
<dbReference type="KEGG" id="mmu:12475"/>
<dbReference type="UCSC" id="uc008eof.2">
    <property type="organism name" value="mouse"/>
</dbReference>
<dbReference type="AGR" id="MGI:88318"/>
<dbReference type="CTD" id="929"/>
<dbReference type="MGI" id="MGI:88318">
    <property type="gene designation" value="Cd14"/>
</dbReference>
<dbReference type="VEuPathDB" id="HostDB:ENSMUSG00000051439"/>
<dbReference type="eggNOG" id="ENOG502SNYQ">
    <property type="taxonomic scope" value="Eukaryota"/>
</dbReference>
<dbReference type="GeneTree" id="ENSGT00390000005689"/>
<dbReference type="HOGENOM" id="CLU_062152_0_0_1"/>
<dbReference type="InParanoid" id="P10810"/>
<dbReference type="OMA" id="SSSCQWP"/>
<dbReference type="OrthoDB" id="676979at2759"/>
<dbReference type="PhylomeDB" id="P10810"/>
<dbReference type="TreeFam" id="TF338550"/>
<dbReference type="Reactome" id="R-MMU-140534">
    <property type="pathway name" value="Caspase activation via Death Receptors in the presence of ligand"/>
</dbReference>
<dbReference type="Reactome" id="R-MMU-166016">
    <property type="pathway name" value="Toll Like Receptor 4 (TLR4) Cascade"/>
</dbReference>
<dbReference type="Reactome" id="R-MMU-166020">
    <property type="pathway name" value="Transfer of LPS from LBP carrier to CD14"/>
</dbReference>
<dbReference type="Reactome" id="R-MMU-166166">
    <property type="pathway name" value="MyD88-independent TLR4 cascade"/>
</dbReference>
<dbReference type="Reactome" id="R-MMU-2562578">
    <property type="pathway name" value="TRIF-mediated programmed cell death"/>
</dbReference>
<dbReference type="Reactome" id="R-MMU-5686938">
    <property type="pathway name" value="Regulation of TLR by endogenous ligand"/>
</dbReference>
<dbReference type="Reactome" id="R-MMU-6798695">
    <property type="pathway name" value="Neutrophil degranulation"/>
</dbReference>
<dbReference type="Reactome" id="R-MMU-936964">
    <property type="pathway name" value="Activation of IRF3, IRF7 mediated by TBK1, IKKEpsilon (IKBKE)"/>
</dbReference>
<dbReference type="Reactome" id="R-MMU-937041">
    <property type="pathway name" value="IKK complex recruitment mediated by RIP1"/>
</dbReference>
<dbReference type="Reactome" id="R-MMU-937072">
    <property type="pathway name" value="TRAF6-mediated induction of TAK1 complex within TLR4 complex"/>
</dbReference>
<dbReference type="Reactome" id="R-MMU-975163">
    <property type="pathway name" value="IRAK2 mediated activation of TAK1 complex upon TLR7/8 or 9 stimulation"/>
</dbReference>
<dbReference type="Reactome" id="R-MMU-9824878">
    <property type="pathway name" value="Regulation of TBK1, IKKEpsilon (IKBKE)-mediated activation of IRF3, IRF7"/>
</dbReference>
<dbReference type="BioGRID-ORCS" id="12475">
    <property type="hits" value="2 hits in 80 CRISPR screens"/>
</dbReference>
<dbReference type="ChiTaRS" id="Cd14">
    <property type="organism name" value="mouse"/>
</dbReference>
<dbReference type="EvolutionaryTrace" id="P10810"/>
<dbReference type="PRO" id="PR:P10810"/>
<dbReference type="Proteomes" id="UP000000589">
    <property type="component" value="Chromosome 18"/>
</dbReference>
<dbReference type="RNAct" id="P10810">
    <property type="molecule type" value="protein"/>
</dbReference>
<dbReference type="Bgee" id="ENSMUSG00000051439">
    <property type="expression patterns" value="Expressed in thoracic mammary gland and 138 other cell types or tissues"/>
</dbReference>
<dbReference type="ExpressionAtlas" id="P10810">
    <property type="expression patterns" value="baseline and differential"/>
</dbReference>
<dbReference type="GO" id="GO:0009897">
    <property type="term" value="C:external side of plasma membrane"/>
    <property type="evidence" value="ECO:0000314"/>
    <property type="project" value="UniProtKB"/>
</dbReference>
<dbReference type="GO" id="GO:0005615">
    <property type="term" value="C:extracellular space"/>
    <property type="evidence" value="ECO:0007669"/>
    <property type="project" value="Ensembl"/>
</dbReference>
<dbReference type="GO" id="GO:0005794">
    <property type="term" value="C:Golgi apparatus"/>
    <property type="evidence" value="ECO:0000250"/>
    <property type="project" value="UniProtKB"/>
</dbReference>
<dbReference type="GO" id="GO:0046696">
    <property type="term" value="C:lipopolysaccharide receptor complex"/>
    <property type="evidence" value="ECO:0000250"/>
    <property type="project" value="UniProtKB"/>
</dbReference>
<dbReference type="GO" id="GO:0045121">
    <property type="term" value="C:membrane raft"/>
    <property type="evidence" value="ECO:0000314"/>
    <property type="project" value="UniProtKB"/>
</dbReference>
<dbReference type="GO" id="GO:0001530">
    <property type="term" value="F:lipopolysaccharide binding"/>
    <property type="evidence" value="ECO:0000266"/>
    <property type="project" value="MGI"/>
</dbReference>
<dbReference type="GO" id="GO:0001875">
    <property type="term" value="F:lipopolysaccharide immune receptor activity"/>
    <property type="evidence" value="ECO:0007669"/>
    <property type="project" value="Ensembl"/>
</dbReference>
<dbReference type="GO" id="GO:0070891">
    <property type="term" value="F:lipoteichoic acid binding"/>
    <property type="evidence" value="ECO:0000266"/>
    <property type="project" value="MGI"/>
</dbReference>
<dbReference type="GO" id="GO:0140104">
    <property type="term" value="F:molecular carrier activity"/>
    <property type="evidence" value="ECO:0007669"/>
    <property type="project" value="Ensembl"/>
</dbReference>
<dbReference type="GO" id="GO:0071726">
    <property type="term" value="P:cellular response to diacyl bacterial lipopeptide"/>
    <property type="evidence" value="ECO:0000250"/>
    <property type="project" value="UniProtKB"/>
</dbReference>
<dbReference type="GO" id="GO:0071222">
    <property type="term" value="P:cellular response to lipopolysaccharide"/>
    <property type="evidence" value="ECO:0000315"/>
    <property type="project" value="UniProtKB"/>
</dbReference>
<dbReference type="GO" id="GO:0071223">
    <property type="term" value="P:cellular response to lipoteichoic acid"/>
    <property type="evidence" value="ECO:0000266"/>
    <property type="project" value="MGI"/>
</dbReference>
<dbReference type="GO" id="GO:0071727">
    <property type="term" value="P:cellular response to triacyl bacterial lipopeptide"/>
    <property type="evidence" value="ECO:0000250"/>
    <property type="project" value="UniProtKB"/>
</dbReference>
<dbReference type="GO" id="GO:0006954">
    <property type="term" value="P:inflammatory response"/>
    <property type="evidence" value="ECO:0007669"/>
    <property type="project" value="UniProtKB-KW"/>
</dbReference>
<dbReference type="GO" id="GO:0045087">
    <property type="term" value="P:innate immune response"/>
    <property type="evidence" value="ECO:0007669"/>
    <property type="project" value="UniProtKB-KW"/>
</dbReference>
<dbReference type="GO" id="GO:0045807">
    <property type="term" value="P:positive regulation of endocytosis"/>
    <property type="evidence" value="ECO:0000315"/>
    <property type="project" value="UniProtKB"/>
</dbReference>
<dbReference type="GO" id="GO:0032757">
    <property type="term" value="P:positive regulation of interleukin-8 production"/>
    <property type="evidence" value="ECO:0007669"/>
    <property type="project" value="Ensembl"/>
</dbReference>
<dbReference type="GO" id="GO:0031666">
    <property type="term" value="P:positive regulation of lipopolysaccharide-mediated signaling pathway"/>
    <property type="evidence" value="ECO:0000315"/>
    <property type="project" value="UniProtKB"/>
</dbReference>
<dbReference type="GO" id="GO:0034145">
    <property type="term" value="P:positive regulation of toll-like receptor 4 signaling pathway"/>
    <property type="evidence" value="ECO:0000315"/>
    <property type="project" value="UniProtKB"/>
</dbReference>
<dbReference type="GO" id="GO:0032760">
    <property type="term" value="P:positive regulation of tumor necrosis factor production"/>
    <property type="evidence" value="ECO:0000315"/>
    <property type="project" value="UniProtKB"/>
</dbReference>
<dbReference type="GO" id="GO:0032481">
    <property type="term" value="P:positive regulation of type I interferon production"/>
    <property type="evidence" value="ECO:0000315"/>
    <property type="project" value="CACAO"/>
</dbReference>
<dbReference type="GO" id="GO:0032729">
    <property type="term" value="P:positive regulation of type II interferon production"/>
    <property type="evidence" value="ECO:0000315"/>
    <property type="project" value="UniProtKB"/>
</dbReference>
<dbReference type="GO" id="GO:0006898">
    <property type="term" value="P:receptor-mediated endocytosis"/>
    <property type="evidence" value="ECO:0000315"/>
    <property type="project" value="CACAO"/>
</dbReference>
<dbReference type="GO" id="GO:0009617">
    <property type="term" value="P:response to bacterium"/>
    <property type="evidence" value="ECO:0000315"/>
    <property type="project" value="UniProtKB"/>
</dbReference>
<dbReference type="GO" id="GO:0051602">
    <property type="term" value="P:response to electrical stimulus"/>
    <property type="evidence" value="ECO:0007669"/>
    <property type="project" value="Ensembl"/>
</dbReference>
<dbReference type="GO" id="GO:0045471">
    <property type="term" value="P:response to ethanol"/>
    <property type="evidence" value="ECO:0007669"/>
    <property type="project" value="Ensembl"/>
</dbReference>
<dbReference type="GO" id="GO:0032026">
    <property type="term" value="P:response to magnesium ion"/>
    <property type="evidence" value="ECO:0007669"/>
    <property type="project" value="Ensembl"/>
</dbReference>
<dbReference type="GO" id="GO:0002237">
    <property type="term" value="P:response to molecule of bacterial origin"/>
    <property type="evidence" value="ECO:0000314"/>
    <property type="project" value="UniProtKB"/>
</dbReference>
<dbReference type="GO" id="GO:0034612">
    <property type="term" value="P:response to tumor necrosis factor"/>
    <property type="evidence" value="ECO:0007669"/>
    <property type="project" value="Ensembl"/>
</dbReference>
<dbReference type="GO" id="GO:0034142">
    <property type="term" value="P:toll-like receptor 4 signaling pathway"/>
    <property type="evidence" value="ECO:0007669"/>
    <property type="project" value="Ensembl"/>
</dbReference>
<dbReference type="FunFam" id="3.80.10.10:FF:000244">
    <property type="entry name" value="Monocyte differentiation antigen CD14"/>
    <property type="match status" value="1"/>
</dbReference>
<dbReference type="Gene3D" id="3.80.10.10">
    <property type="entry name" value="Ribonuclease Inhibitor"/>
    <property type="match status" value="1"/>
</dbReference>
<dbReference type="InterPro" id="IPR001611">
    <property type="entry name" value="Leu-rich_rpt"/>
</dbReference>
<dbReference type="InterPro" id="IPR032675">
    <property type="entry name" value="LRR_dom_sf"/>
</dbReference>
<dbReference type="InterPro" id="IPR016337">
    <property type="entry name" value="Monocyte_diff_Ag_CD14"/>
</dbReference>
<dbReference type="PANTHER" id="PTHR10630">
    <property type="entry name" value="MONOCYTE DIFFERENTIATION ANTIGEN CD14"/>
    <property type="match status" value="1"/>
</dbReference>
<dbReference type="PANTHER" id="PTHR10630:SF3">
    <property type="entry name" value="MONOCYTE DIFFERENTIATION ANTIGEN CD14"/>
    <property type="match status" value="1"/>
</dbReference>
<dbReference type="Pfam" id="PF00560">
    <property type="entry name" value="LRR_1"/>
    <property type="match status" value="1"/>
</dbReference>
<dbReference type="PIRSF" id="PIRSF002017">
    <property type="entry name" value="CD14"/>
    <property type="match status" value="1"/>
</dbReference>
<dbReference type="SUPFAM" id="SSF52058">
    <property type="entry name" value="L domain-like"/>
    <property type="match status" value="1"/>
</dbReference>
<dbReference type="PROSITE" id="PS51450">
    <property type="entry name" value="LRR"/>
    <property type="match status" value="3"/>
</dbReference>
<gene>
    <name type="primary">Cd14</name>
</gene>
<protein>
    <recommendedName>
        <fullName>Monocyte differentiation antigen CD14</fullName>
    </recommendedName>
    <alternativeName>
        <fullName>Myeloid cell-specific leucine-rich glycoprotein</fullName>
    </alternativeName>
    <cdAntigenName>CD14</cdAntigenName>
</protein>
<sequence>MERVLGLLLLLLVHASPAPPEPCELDEESCSCNFSDPKPDWSSAFNCLGAADVELYGGGRSLEYLLKRVDTEADLGQFTDIIKSLSLKRLTVRAARIPSRILFGALRVLGISGLQELTLENLEVTGTAPPPLLEATGPDLNILNLRNVSWATRDAWLAELQQWLKPGLKVLSIAQAHSLNFSCEQVRVFPALSTLDLSDNPELGERGLISALCPLKFPTLQVLALRNAGMETPSGVCSALAAARVQLQGLDLSHNSLRDAAGAPSCDWPSQLNSLNLSFTGLKQVPKGLPAKLSVLDLSYNRLDRNPSPDELPQVGNLSLKGNPFLDSESHSEKFNSGVVTAGAPSSQAVALSGTLALLLGDRLFV</sequence>
<proteinExistence type="evidence at protein level"/>
<name>CD14_MOUSE</name>
<keyword id="KW-0002">3D-structure</keyword>
<keyword id="KW-1003">Cell membrane</keyword>
<keyword id="KW-1015">Disulfide bond</keyword>
<keyword id="KW-0325">Glycoprotein</keyword>
<keyword id="KW-0333">Golgi apparatus</keyword>
<keyword id="KW-0336">GPI-anchor</keyword>
<keyword id="KW-0391">Immunity</keyword>
<keyword id="KW-0395">Inflammatory response</keyword>
<keyword id="KW-0399">Innate immunity</keyword>
<keyword id="KW-0433">Leucine-rich repeat</keyword>
<keyword id="KW-0449">Lipoprotein</keyword>
<keyword id="KW-0472">Membrane</keyword>
<keyword id="KW-1185">Reference proteome</keyword>
<keyword id="KW-0677">Repeat</keyword>
<keyword id="KW-0964">Secreted</keyword>
<keyword id="KW-0732">Signal</keyword>
<evidence type="ECO:0000250" key="1">
    <source>
        <dbReference type="UniProtKB" id="P08571"/>
    </source>
</evidence>
<evidence type="ECO:0000255" key="2"/>
<evidence type="ECO:0000269" key="3">
    <source>
    </source>
</evidence>
<evidence type="ECO:0000269" key="4">
    <source>
    </source>
</evidence>
<evidence type="ECO:0000269" key="5">
    <source>
    </source>
</evidence>
<evidence type="ECO:0000269" key="6">
    <source>
    </source>
</evidence>
<evidence type="ECO:0000269" key="7">
    <source>
    </source>
</evidence>
<evidence type="ECO:0000269" key="8">
    <source>
    </source>
</evidence>
<evidence type="ECO:0007829" key="9">
    <source>
        <dbReference type="PDB" id="1WWL"/>
    </source>
</evidence>
<organism>
    <name type="scientific">Mus musculus</name>
    <name type="common">Mouse</name>
    <dbReference type="NCBI Taxonomy" id="10090"/>
    <lineage>
        <taxon>Eukaryota</taxon>
        <taxon>Metazoa</taxon>
        <taxon>Chordata</taxon>
        <taxon>Craniata</taxon>
        <taxon>Vertebrata</taxon>
        <taxon>Euteleostomi</taxon>
        <taxon>Mammalia</taxon>
        <taxon>Eutheria</taxon>
        <taxon>Euarchontoglires</taxon>
        <taxon>Glires</taxon>
        <taxon>Rodentia</taxon>
        <taxon>Myomorpha</taxon>
        <taxon>Muroidea</taxon>
        <taxon>Muridae</taxon>
        <taxon>Murinae</taxon>
        <taxon>Mus</taxon>
        <taxon>Mus</taxon>
    </lineage>
</organism>
<feature type="signal peptide">
    <location>
        <begin position="1"/>
        <end position="15"/>
    </location>
</feature>
<feature type="chain" id="PRO_0000020887" description="Monocyte differentiation antigen CD14">
    <location>
        <begin position="16"/>
        <end position="336"/>
    </location>
</feature>
<feature type="propeptide" id="PRO_0000020888" description="Removed in mature form" evidence="2">
    <location>
        <begin position="337"/>
        <end position="366"/>
    </location>
</feature>
<feature type="repeat" description="LRR 1">
    <location>
        <begin position="50"/>
        <end position="78"/>
    </location>
</feature>
<feature type="repeat" description="LRR 2">
    <location>
        <begin position="79"/>
        <end position="114"/>
    </location>
</feature>
<feature type="repeat" description="LRR 3">
    <location>
        <begin position="115"/>
        <end position="140"/>
    </location>
</feature>
<feature type="repeat" description="LRR 4">
    <location>
        <begin position="141"/>
        <end position="168"/>
    </location>
</feature>
<feature type="repeat" description="LRR 5">
    <location>
        <begin position="169"/>
        <end position="192"/>
    </location>
</feature>
<feature type="repeat" description="LRR 6">
    <location>
        <begin position="193"/>
        <end position="220"/>
    </location>
</feature>
<feature type="repeat" description="LRR 7">
    <location>
        <begin position="221"/>
        <end position="247"/>
    </location>
</feature>
<feature type="repeat" description="LRR 8">
    <location>
        <begin position="248"/>
        <end position="272"/>
    </location>
</feature>
<feature type="repeat" description="LRR 9">
    <location>
        <begin position="273"/>
        <end position="293"/>
    </location>
</feature>
<feature type="repeat" description="LRR 10">
    <location>
        <begin position="294"/>
        <end position="315"/>
    </location>
</feature>
<feature type="repeat" description="LRR 11">
    <location>
        <begin position="316"/>
        <end position="340"/>
    </location>
</feature>
<feature type="region of interest" description="Required for response to bacterial lipopolysaccharide (LPS)" evidence="4">
    <location>
        <begin position="284"/>
        <end position="366"/>
    </location>
</feature>
<feature type="lipid moiety-binding region" description="GPI-anchor amidated asparagine" evidence="2">
    <location>
        <position position="336"/>
    </location>
</feature>
<feature type="glycosylation site" description="N-linked (GlcNAc...) asparagine" evidence="2">
    <location>
        <position position="33"/>
    </location>
</feature>
<feature type="glycosylation site" description="N-linked (GlcNAc...) asparagine" evidence="3">
    <location>
        <position position="147"/>
    </location>
</feature>
<feature type="glycosylation site" description="N-linked (GlcNAc...) asparagine" evidence="3">
    <location>
        <position position="180"/>
    </location>
</feature>
<feature type="glycosylation site" description="N-linked (GlcNAc...) asparagine" evidence="3">
    <location>
        <position position="276"/>
    </location>
</feature>
<feature type="glycosylation site" description="N-linked (GlcNAc...) asparagine" evidence="2">
    <location>
        <position position="317"/>
    </location>
</feature>
<feature type="disulfide bond" evidence="3">
    <location>
        <begin position="23"/>
        <end position="32"/>
    </location>
</feature>
<feature type="disulfide bond" evidence="3">
    <location>
        <begin position="30"/>
        <end position="47"/>
    </location>
</feature>
<feature type="disulfide bond" evidence="3">
    <location>
        <begin position="183"/>
        <end position="213"/>
    </location>
</feature>
<feature type="disulfide bond" evidence="3">
    <location>
        <begin position="237"/>
        <end position="266"/>
    </location>
</feature>
<feature type="strand" evidence="9">
    <location>
        <begin position="36"/>
        <end position="38"/>
    </location>
</feature>
<feature type="helix" evidence="9">
    <location>
        <begin position="41"/>
        <end position="46"/>
    </location>
</feature>
<feature type="strand" evidence="9">
    <location>
        <begin position="47"/>
        <end position="49"/>
    </location>
</feature>
<feature type="strand" evidence="9">
    <location>
        <begin position="51"/>
        <end position="61"/>
    </location>
</feature>
<feature type="helix" evidence="9">
    <location>
        <begin position="65"/>
        <end position="68"/>
    </location>
</feature>
<feature type="helix" evidence="9">
    <location>
        <begin position="76"/>
        <end position="84"/>
    </location>
</feature>
<feature type="strand" evidence="9">
    <location>
        <begin position="89"/>
        <end position="96"/>
    </location>
</feature>
<feature type="helix" evidence="9">
    <location>
        <begin position="99"/>
        <end position="109"/>
    </location>
</feature>
<feature type="strand" evidence="9">
    <location>
        <begin position="116"/>
        <end position="123"/>
    </location>
</feature>
<feature type="strand" evidence="9">
    <location>
        <begin position="132"/>
        <end position="134"/>
    </location>
</feature>
<feature type="strand" evidence="9">
    <location>
        <begin position="141"/>
        <end position="147"/>
    </location>
</feature>
<feature type="strand" evidence="9">
    <location>
        <begin position="151"/>
        <end position="155"/>
    </location>
</feature>
<feature type="helix" evidence="9">
    <location>
        <begin position="156"/>
        <end position="161"/>
    </location>
</feature>
<feature type="strand" evidence="9">
    <location>
        <begin position="170"/>
        <end position="175"/>
    </location>
</feature>
<feature type="turn" evidence="9">
    <location>
        <begin position="183"/>
        <end position="185"/>
    </location>
</feature>
<feature type="strand" evidence="9">
    <location>
        <begin position="194"/>
        <end position="196"/>
    </location>
</feature>
<feature type="helix" evidence="9">
    <location>
        <begin position="204"/>
        <end position="211"/>
    </location>
</feature>
<feature type="strand" evidence="9">
    <location>
        <begin position="222"/>
        <end position="224"/>
    </location>
</feature>
<feature type="helix" evidence="9">
    <location>
        <begin position="233"/>
        <end position="242"/>
    </location>
</feature>
<feature type="strand" evidence="9">
    <location>
        <begin position="248"/>
        <end position="251"/>
    </location>
</feature>
<feature type="strand" evidence="9">
    <location>
        <begin position="274"/>
        <end position="276"/>
    </location>
</feature>
<feature type="strand" evidence="9">
    <location>
        <begin position="291"/>
        <end position="297"/>
    </location>
</feature>
<feature type="turn" evidence="9">
    <location>
        <begin position="309"/>
        <end position="311"/>
    </location>
</feature>
<feature type="strand" evidence="9">
    <location>
        <begin position="314"/>
        <end position="319"/>
    </location>
</feature>
<feature type="turn" evidence="9">
    <location>
        <begin position="324"/>
        <end position="326"/>
    </location>
</feature>
<reference key="1">
    <citation type="journal article" date="1989" name="Nucleic Acids Res.">
        <title>Nucleotide and amino acid sequences of the mouse CD14 gene.</title>
        <authorList>
            <person name="Miyazaki Y."/>
            <person name="Setoguchi M."/>
            <person name="Yoshida S."/>
            <person name="Higuchi Y."/>
            <person name="Akizuki S."/>
            <person name="Yamamoto S."/>
        </authorList>
    </citation>
    <scope>NUCLEOTIDE SEQUENCE [GENOMIC DNA]</scope>
    <source>
        <strain>BALB/cJ</strain>
        <tissue>Liver</tissue>
    </source>
</reference>
<reference key="2">
    <citation type="journal article" date="1989" name="Biochim. Biophys. Acta">
        <title>Mouse and human CD14 (myeloid cell-specific leucine-rich glycoprotein) primary structure deduced from cDNA clones.</title>
        <authorList>
            <person name="Setoguchi M."/>
            <person name="Nasu N."/>
            <person name="Yoshida S."/>
            <person name="Higuchi Y."/>
            <person name="Akizuki S."/>
            <person name="Yamamoto S."/>
        </authorList>
    </citation>
    <scope>NUCLEOTIDE SEQUENCE [MRNA]</scope>
    <source>
        <strain>ICR</strain>
        <tissue>Macrophage</tissue>
    </source>
</reference>
<reference key="3">
    <citation type="journal article" date="1990" name="J. Immunol.">
        <title>CD14 is a member of the family of leucine-rich proteins and is encoded by a gene syntenic with multiple receptor genes.</title>
        <authorList>
            <person name="Ferrero E."/>
            <person name="Hsieh C.L."/>
            <person name="Francke U."/>
            <person name="Goyert S.M."/>
        </authorList>
    </citation>
    <scope>NUCLEOTIDE SEQUENCE [GENOMIC DNA]</scope>
</reference>
<reference key="4">
    <citation type="journal article" date="2004" name="Genome Res.">
        <title>The status, quality, and expansion of the NIH full-length cDNA project: the Mammalian Gene Collection (MGC).</title>
        <authorList>
            <consortium name="The MGC Project Team"/>
        </authorList>
    </citation>
    <scope>NUCLEOTIDE SEQUENCE [LARGE SCALE MRNA]</scope>
    <source>
        <strain>NMRI</strain>
        <tissue>Mammary gland</tissue>
    </source>
</reference>
<reference key="5">
    <citation type="journal article" date="1996" name="Immunity">
        <title>Resistance to endotoxin shock and reduced dissemination of gram-negative bacteria in CD14-deficient mice.</title>
        <authorList>
            <person name="Haziot A."/>
            <person name="Ferrero E."/>
            <person name="Kontgen F."/>
            <person name="Hijiya N."/>
            <person name="Yamamoto S."/>
            <person name="Silver J."/>
            <person name="Stewart C.L."/>
            <person name="Goyert S.M."/>
        </authorList>
    </citation>
    <scope>DISRUPTION PHENOTYPE</scope>
    <scope>FUNCTION</scope>
    <scope>SUBCELLULAR LOCATION</scope>
</reference>
<reference key="6">
    <citation type="journal article" date="2005" name="J. Immunol.">
        <title>Influence of CD14 on ligand interactions between lipopolysaccharide and its receptor complex.</title>
        <authorList>
            <person name="Gangloff S.C."/>
            <person name="Zahringer U."/>
            <person name="Blondin C."/>
            <person name="Guenounou M."/>
            <person name="Silver J."/>
            <person name="Goyert S.M."/>
        </authorList>
    </citation>
    <scope>FUNCTION</scope>
</reference>
<reference key="7">
    <citation type="journal article" date="2005" name="Nat. Immunol.">
        <title>CD14 is required for MyD88-independent LPS signaling.</title>
        <authorList>
            <person name="Jiang Z."/>
            <person name="Georgel P."/>
            <person name="Du X."/>
            <person name="Shamel L."/>
            <person name="Sovath S."/>
            <person name="Mudd S."/>
            <person name="Huber M."/>
            <person name="Kalis C."/>
            <person name="Keck S."/>
            <person name="Galanos C."/>
            <person name="Freudenberg M."/>
            <person name="Beutler B."/>
        </authorList>
    </citation>
    <scope>FUNCTION</scope>
    <scope>DOMAIN</scope>
</reference>
<reference key="8">
    <citation type="journal article" date="2009" name="Cell. Immunol.">
        <title>TLR2 and its co-receptors determine responses of macrophages and dendritic cells to lipoproteins of Mycobacterium tuberculosis.</title>
        <authorList>
            <person name="Drage M.G."/>
            <person name="Pecora N.D."/>
            <person name="Hise A.G."/>
            <person name="Febbraio M."/>
            <person name="Silverstein R.L."/>
            <person name="Golenbock D.T."/>
            <person name="Boom W.H."/>
            <person name="Harding C.V."/>
        </authorList>
    </citation>
    <scope>FUNCTION</scope>
    <scope>TISSUE SPECIFICITY</scope>
    <source>
        <tissue>Macrophage</tissue>
    </source>
</reference>
<reference key="9">
    <citation type="journal article" date="2011" name="Am. J. Physiol.">
        <title>Lysophosphatidic acid receptor 1 modulates lipopolysaccharide-induced inflammation in alveolar epithelial cells and murine lungs.</title>
        <authorList>
            <person name="Zhao J."/>
            <person name="He D."/>
            <person name="Su Y."/>
            <person name="Berdyshev E."/>
            <person name="Chun J."/>
            <person name="Natarajan V."/>
            <person name="Zhao Y."/>
        </authorList>
    </citation>
    <scope>FUNCTION</scope>
    <scope>INTERACTION WITH LPAR1</scope>
    <scope>SUBCELLULAR LOCATION</scope>
</reference>
<reference key="10">
    <citation type="journal article" date="2014" name="Int. Immunol.">
        <title>The attenuated inflammation of MPL is due to the lack of CD14-dependent tight dimerization of the TLR4/MD2 complex at the plasma membrane.</title>
        <authorList>
            <person name="Tanimura N."/>
            <person name="Saitoh S."/>
            <person name="Ohto U."/>
            <person name="Akashi-Takamura S."/>
            <person name="Fujimoto Y."/>
            <person name="Fukase K."/>
            <person name="Shimizu T."/>
            <person name="Miyake K."/>
        </authorList>
    </citation>
    <scope>FUNCTION</scope>
</reference>
<reference key="11">
    <citation type="journal article" date="2005" name="J. Biol. Chem.">
        <title>Crystal structure of CD14 and its implications for lipopolysaccharide signaling.</title>
        <authorList>
            <person name="Kim J.I."/>
            <person name="Lee C.J."/>
            <person name="Jin M.S."/>
            <person name="Lee C.H."/>
            <person name="Paik S.G."/>
            <person name="Lee H."/>
            <person name="Lee J.O."/>
        </authorList>
    </citation>
    <scope>X-RAY CRYSTALLOGRAPHY (2.5 ANGSTROMS) OF 20-329</scope>
    <scope>DISULFIDE BONDS</scope>
    <scope>GLYCOSYLATION AT ASN-147; ASN-180 AND ASN-276</scope>
    <scope>DOMAINS LEUCINE-RICH REPEATS</scope>
</reference>
<comment type="function">
    <text evidence="1 4 5 6 7 8">Coreceptor for bacterial lipopolysaccharide. In concert with LBP, binds to monomeric lipopolysaccharide and delivers it to the LY96/TLR4 complex, thereby mediating the innate immune response to bacterial lipopolysaccharide (LPS) (PubMed:16148141). Acts via MyD88, TIRAP and TRAF6, leading to NF-kappa-B activation, cytokine secretion and the inflammatory response (PubMed:15895089, PubMed:8612135). Acts as a coreceptor for TLR2:TLR6 heterodimer in response to diacylated lipopeptides and for TLR2:TLR1 heterodimer in response to triacylated lipopeptides, these clusters trigger signaling from the cell surface and subsequently are targeted to the Golgi in a lipid-raft dependent pathway (By similarity). Acts as an accessory receptor for M.tuberculosis lipoproteins LprA, LprG and LpqH, in conjunction with coreceptors TLR2 and TLR1. The lipoproteins act as agonists to modulate antigen presenting cell functions in response to the pathogen (PubMed:19362712). Binds electronegative LDL (LDL(-)) and mediates the cytokine release induced by LDL(-) (By similarity).</text>
</comment>
<comment type="subunit">
    <text evidence="1 7">Belongs to the lipopolysaccharide (LPS) receptor, a multi-protein complex containing at least CD14, LY96 and TLR4 (By similarity). Interacts with LPS-bound LPB. Interacts with LPAR1 (PubMed:21821728). Interacts with the TLR2:TLR6 or TLR2:TLR1 heterodimers; upon interaction with ligands such as diacylated lipopeptides and triacylated lipopeptides, respectively. Interacts with MYO18A (By similarity). Interacts with FSTL1 (By similarity).</text>
</comment>
<comment type="subcellular location">
    <subcellularLocation>
        <location evidence="7 8">Cell membrane</location>
        <topology evidence="1">Lipid-anchor</topology>
        <topology evidence="1">GPI-anchor</topology>
    </subcellularLocation>
    <subcellularLocation>
        <location evidence="1">Secreted</location>
    </subcellularLocation>
    <subcellularLocation>
        <location evidence="1">Membrane raft</location>
    </subcellularLocation>
    <subcellularLocation>
        <location evidence="1">Golgi apparatus</location>
    </subcellularLocation>
    <text evidence="1">Soluble, secreted forms seem to exist. They may arise by cleavage of the GPI anchor.</text>
</comment>
<comment type="tissue specificity">
    <text evidence="6 8">Detected on peritoneal macrophages (at protein level) (PubMed:8612135). Cell surface expression detected in lung alveolar macrophages, dendritic macrophages and lung macrophages (at protein level) (PubMed:19362712).</text>
</comment>
<comment type="domain">
    <text evidence="4">The C-terminal leucine-rich repeat (LRR) region is required for responses to smooth LPS.</text>
</comment>
<comment type="disruption phenotype">
    <text evidence="8">No visible phenotype. Mice are fertile and appear healthy when kept in a clean, microbe-free environment. Mice do not respond to bacterial smooth lipopolysaccharide (LPS). Contrary to wild-type, they do not develop toxic shock or secrete TNF in response to LPS. Surprisingly, they have fewer live bacteria in their lungs and bloodstream after inoculation with bacteria and are not killed by an inoculum that is lethal to wild-type; they are killed when the inoculum is further increased.</text>
</comment>
<accession>P10810</accession>